<keyword id="KW-0028">Amino-acid biosynthesis</keyword>
<keyword id="KW-0223">Dioxygenase</keyword>
<keyword id="KW-0408">Iron</keyword>
<keyword id="KW-0479">Metal-binding</keyword>
<keyword id="KW-0486">Methionine biosynthesis</keyword>
<keyword id="KW-0533">Nickel</keyword>
<keyword id="KW-0560">Oxidoreductase</keyword>
<proteinExistence type="inferred from homology"/>
<comment type="function">
    <text evidence="1">Catalyzes 2 different reactions between oxygen and the acireductone 1,2-dihydroxy-3-keto-5-methylthiopentene (DHK-MTPene) depending upon the metal bound in the active site. Fe-containing acireductone dioxygenase (Fe-ARD) produces formate and 2-keto-4-methylthiobutyrate (KMTB), the alpha-ketoacid precursor of methionine in the methionine recycle pathway. Ni-containing acireductone dioxygenase (Ni-ARD) produces methylthiopropionate, carbon monoxide and formate, and does not lie on the methionine recycle pathway.</text>
</comment>
<comment type="catalytic activity">
    <reaction evidence="1">
        <text>1,2-dihydroxy-5-(methylsulfanyl)pent-1-en-3-one + O2 = 3-(methylsulfanyl)propanoate + CO + formate + 2 H(+)</text>
        <dbReference type="Rhea" id="RHEA:14161"/>
        <dbReference type="ChEBI" id="CHEBI:15378"/>
        <dbReference type="ChEBI" id="CHEBI:15379"/>
        <dbReference type="ChEBI" id="CHEBI:15740"/>
        <dbReference type="ChEBI" id="CHEBI:17245"/>
        <dbReference type="ChEBI" id="CHEBI:49016"/>
        <dbReference type="ChEBI" id="CHEBI:49252"/>
        <dbReference type="EC" id="1.13.11.53"/>
    </reaction>
</comment>
<comment type="catalytic activity">
    <reaction evidence="1">
        <text>1,2-dihydroxy-5-(methylsulfanyl)pent-1-en-3-one + O2 = 4-methylsulfanyl-2-oxobutanoate + formate + 2 H(+)</text>
        <dbReference type="Rhea" id="RHEA:24504"/>
        <dbReference type="ChEBI" id="CHEBI:15378"/>
        <dbReference type="ChEBI" id="CHEBI:15379"/>
        <dbReference type="ChEBI" id="CHEBI:15740"/>
        <dbReference type="ChEBI" id="CHEBI:16723"/>
        <dbReference type="ChEBI" id="CHEBI:49252"/>
        <dbReference type="EC" id="1.13.11.54"/>
    </reaction>
</comment>
<comment type="cofactor">
    <cofactor evidence="1">
        <name>Fe(2+)</name>
        <dbReference type="ChEBI" id="CHEBI:29033"/>
    </cofactor>
    <text evidence="1">Binds 1 Fe(2+) cation per monomer.</text>
</comment>
<comment type="cofactor">
    <cofactor evidence="1">
        <name>Ni(2+)</name>
        <dbReference type="ChEBI" id="CHEBI:49786"/>
    </cofactor>
    <text evidence="1">Binds 1 nickel ion per monomer.</text>
</comment>
<comment type="pathway">
    <text evidence="1">Amino-acid biosynthesis; L-methionine biosynthesis via salvage pathway; L-methionine from S-methyl-5-thio-alpha-D-ribose 1-phosphate: step 5/6.</text>
</comment>
<comment type="subunit">
    <text evidence="1">Monomer.</text>
</comment>
<comment type="similarity">
    <text evidence="1">Belongs to the acireductone dioxygenase (ARD) family.</text>
</comment>
<organism>
    <name type="scientific">Marinobacter nauticus (strain ATCC 700491 / DSM 11845 / VT8)</name>
    <name type="common">Marinobacter aquaeolei</name>
    <dbReference type="NCBI Taxonomy" id="351348"/>
    <lineage>
        <taxon>Bacteria</taxon>
        <taxon>Pseudomonadati</taxon>
        <taxon>Pseudomonadota</taxon>
        <taxon>Gammaproteobacteria</taxon>
        <taxon>Pseudomonadales</taxon>
        <taxon>Marinobacteraceae</taxon>
        <taxon>Marinobacter</taxon>
    </lineage>
</organism>
<evidence type="ECO:0000255" key="1">
    <source>
        <dbReference type="HAMAP-Rule" id="MF_01682"/>
    </source>
</evidence>
<dbReference type="EC" id="1.13.11.54" evidence="1"/>
<dbReference type="EC" id="1.13.11.53" evidence="1"/>
<dbReference type="EMBL" id="CP000514">
    <property type="protein sequence ID" value="ABM18004.1"/>
    <property type="molecule type" value="Genomic_DNA"/>
</dbReference>
<dbReference type="RefSeq" id="WP_011784424.1">
    <property type="nucleotide sequence ID" value="NC_008740.1"/>
</dbReference>
<dbReference type="SMR" id="A1TZ35"/>
<dbReference type="STRING" id="351348.Maqu_0908"/>
<dbReference type="KEGG" id="maq:Maqu_0908"/>
<dbReference type="eggNOG" id="COG1791">
    <property type="taxonomic scope" value="Bacteria"/>
</dbReference>
<dbReference type="HOGENOM" id="CLU_125400_0_0_6"/>
<dbReference type="OrthoDB" id="9795636at2"/>
<dbReference type="UniPathway" id="UPA00904">
    <property type="reaction ID" value="UER00878"/>
</dbReference>
<dbReference type="Proteomes" id="UP000000998">
    <property type="component" value="Chromosome"/>
</dbReference>
<dbReference type="GO" id="GO:0010308">
    <property type="term" value="F:acireductone dioxygenase (Ni2+-requiring) activity"/>
    <property type="evidence" value="ECO:0007669"/>
    <property type="project" value="UniProtKB-UniRule"/>
</dbReference>
<dbReference type="GO" id="GO:0010309">
    <property type="term" value="F:acireductone dioxygenase [iron(II)-requiring] activity"/>
    <property type="evidence" value="ECO:0007669"/>
    <property type="project" value="UniProtKB-UniRule"/>
</dbReference>
<dbReference type="GO" id="GO:0005506">
    <property type="term" value="F:iron ion binding"/>
    <property type="evidence" value="ECO:0007669"/>
    <property type="project" value="UniProtKB-UniRule"/>
</dbReference>
<dbReference type="GO" id="GO:0016151">
    <property type="term" value="F:nickel cation binding"/>
    <property type="evidence" value="ECO:0007669"/>
    <property type="project" value="UniProtKB-UniRule"/>
</dbReference>
<dbReference type="GO" id="GO:0019509">
    <property type="term" value="P:L-methionine salvage from methylthioadenosine"/>
    <property type="evidence" value="ECO:0007669"/>
    <property type="project" value="UniProtKB-UniRule"/>
</dbReference>
<dbReference type="GO" id="GO:0019284">
    <property type="term" value="P:L-methionine salvage from S-adenosylmethionine"/>
    <property type="evidence" value="ECO:0007669"/>
    <property type="project" value="InterPro"/>
</dbReference>
<dbReference type="CDD" id="cd02232">
    <property type="entry name" value="cupin_ARD"/>
    <property type="match status" value="1"/>
</dbReference>
<dbReference type="Gene3D" id="2.60.120.10">
    <property type="entry name" value="Jelly Rolls"/>
    <property type="match status" value="1"/>
</dbReference>
<dbReference type="HAMAP" id="MF_01682">
    <property type="entry name" value="Salvage_MtnD"/>
    <property type="match status" value="1"/>
</dbReference>
<dbReference type="InterPro" id="IPR004313">
    <property type="entry name" value="ARD"/>
</dbReference>
<dbReference type="InterPro" id="IPR023956">
    <property type="entry name" value="ARD_bac"/>
</dbReference>
<dbReference type="InterPro" id="IPR014710">
    <property type="entry name" value="RmlC-like_jellyroll"/>
</dbReference>
<dbReference type="InterPro" id="IPR011051">
    <property type="entry name" value="RmlC_Cupin_sf"/>
</dbReference>
<dbReference type="PANTHER" id="PTHR23418">
    <property type="entry name" value="ACIREDUCTONE DIOXYGENASE"/>
    <property type="match status" value="1"/>
</dbReference>
<dbReference type="PANTHER" id="PTHR23418:SF0">
    <property type="entry name" value="ACIREDUCTONE DIOXYGENASE"/>
    <property type="match status" value="1"/>
</dbReference>
<dbReference type="Pfam" id="PF03079">
    <property type="entry name" value="ARD"/>
    <property type="match status" value="1"/>
</dbReference>
<dbReference type="SUPFAM" id="SSF51182">
    <property type="entry name" value="RmlC-like cupins"/>
    <property type="match status" value="1"/>
</dbReference>
<gene>
    <name evidence="1" type="primary">mtnD</name>
    <name type="ordered locus">Maqu_0908</name>
</gene>
<protein>
    <recommendedName>
        <fullName evidence="1">Acireductone dioxygenase</fullName>
    </recommendedName>
    <alternativeName>
        <fullName evidence="1">1,2-dihydroxy-3-keto-5-methylthiopentene dioxygenase</fullName>
        <shortName evidence="1">DHK-MTPene dioxygenase</shortName>
    </alternativeName>
    <alternativeName>
        <fullName evidence="1">Acireductone dioxygenase (Fe(2+)-requiring)</fullName>
        <shortName evidence="1">ARD'</shortName>
        <shortName evidence="1">Fe-ARD</shortName>
        <ecNumber evidence="1">1.13.11.54</ecNumber>
    </alternativeName>
    <alternativeName>
        <fullName evidence="1">Acireductone dioxygenase (Ni(2+)-requiring)</fullName>
        <shortName evidence="1">ARD</shortName>
        <shortName evidence="1">Ni-ARD</shortName>
        <ecNumber evidence="1">1.13.11.53</ecNumber>
    </alternativeName>
</protein>
<reference key="1">
    <citation type="journal article" date="2011" name="Appl. Environ. Microbiol.">
        <title>Genomic potential of Marinobacter aquaeolei, a biogeochemical 'opportunitroph'.</title>
        <authorList>
            <person name="Singer E."/>
            <person name="Webb E.A."/>
            <person name="Nelson W.C."/>
            <person name="Heidelberg J.F."/>
            <person name="Ivanova N."/>
            <person name="Pati A."/>
            <person name="Edwards K.J."/>
        </authorList>
    </citation>
    <scope>NUCLEOTIDE SEQUENCE [LARGE SCALE GENOMIC DNA]</scope>
    <source>
        <strain>ATCC 700491 / DSM 11845 / VT8</strain>
    </source>
</reference>
<feature type="chain" id="PRO_0000359208" description="Acireductone dioxygenase">
    <location>
        <begin position="1"/>
        <end position="185"/>
    </location>
</feature>
<feature type="binding site" evidence="1">
    <location>
        <position position="96"/>
    </location>
    <ligand>
        <name>Fe(2+)</name>
        <dbReference type="ChEBI" id="CHEBI:29033"/>
    </ligand>
</feature>
<feature type="binding site" evidence="1">
    <location>
        <position position="96"/>
    </location>
    <ligand>
        <name>Ni(2+)</name>
        <dbReference type="ChEBI" id="CHEBI:49786"/>
    </ligand>
</feature>
<feature type="binding site" evidence="1">
    <location>
        <position position="98"/>
    </location>
    <ligand>
        <name>Fe(2+)</name>
        <dbReference type="ChEBI" id="CHEBI:29033"/>
    </ligand>
</feature>
<feature type="binding site" evidence="1">
    <location>
        <position position="98"/>
    </location>
    <ligand>
        <name>Ni(2+)</name>
        <dbReference type="ChEBI" id="CHEBI:49786"/>
    </ligand>
</feature>
<feature type="binding site" evidence="1">
    <location>
        <position position="102"/>
    </location>
    <ligand>
        <name>Fe(2+)</name>
        <dbReference type="ChEBI" id="CHEBI:29033"/>
    </ligand>
</feature>
<feature type="binding site" evidence="1">
    <location>
        <position position="102"/>
    </location>
    <ligand>
        <name>Ni(2+)</name>
        <dbReference type="ChEBI" id="CHEBI:49786"/>
    </ligand>
</feature>
<feature type="binding site" evidence="1">
    <location>
        <position position="140"/>
    </location>
    <ligand>
        <name>Fe(2+)</name>
        <dbReference type="ChEBI" id="CHEBI:29033"/>
    </ligand>
</feature>
<feature type="binding site" evidence="1">
    <location>
        <position position="140"/>
    </location>
    <ligand>
        <name>Ni(2+)</name>
        <dbReference type="ChEBI" id="CHEBI:49786"/>
    </ligand>
</feature>
<feature type="site" description="May play a role in metal incorporation in vivo" evidence="1">
    <location>
        <position position="95"/>
    </location>
</feature>
<feature type="site" description="May play a role in transmitting local conformational changes" evidence="1">
    <location>
        <position position="101"/>
    </location>
</feature>
<feature type="site" description="Important to generate the dianion" evidence="1">
    <location>
        <position position="104"/>
    </location>
</feature>
<sequence>MTTLSIFHQNQPEQAQTVVTDPDTIRNKLSAHGVHFDRWATRDLPADATQEEILEAYADEVARLKQDWGFQTADVVSLTADHPQKDAFRQKFLDEHTHSEDEVRFFVRGQGLFYLHFGDQVYALLCEKNDLISVPDGTRHWFDMGPEPEFTCIRLFSNPEGWVASFTGEDIASRLPRYESLAGGA</sequence>
<accession>A1TZ35</accession>
<name>MTND_MARN8</name>